<gene>
    <name evidence="1" type="primary">hisG</name>
    <name type="ordered locus">YpAngola_A3169</name>
</gene>
<keyword id="KW-0028">Amino-acid biosynthesis</keyword>
<keyword id="KW-0067">ATP-binding</keyword>
<keyword id="KW-0963">Cytoplasm</keyword>
<keyword id="KW-0328">Glycosyltransferase</keyword>
<keyword id="KW-0368">Histidine biosynthesis</keyword>
<keyword id="KW-0460">Magnesium</keyword>
<keyword id="KW-0479">Metal-binding</keyword>
<keyword id="KW-0547">Nucleotide-binding</keyword>
<keyword id="KW-0808">Transferase</keyword>
<organism>
    <name type="scientific">Yersinia pestis bv. Antiqua (strain Angola)</name>
    <dbReference type="NCBI Taxonomy" id="349746"/>
    <lineage>
        <taxon>Bacteria</taxon>
        <taxon>Pseudomonadati</taxon>
        <taxon>Pseudomonadota</taxon>
        <taxon>Gammaproteobacteria</taxon>
        <taxon>Enterobacterales</taxon>
        <taxon>Yersiniaceae</taxon>
        <taxon>Yersinia</taxon>
    </lineage>
</organism>
<accession>A9R2K3</accession>
<dbReference type="EC" id="2.4.2.17" evidence="1"/>
<dbReference type="EMBL" id="CP000901">
    <property type="protein sequence ID" value="ABX86083.1"/>
    <property type="molecule type" value="Genomic_DNA"/>
</dbReference>
<dbReference type="RefSeq" id="WP_002211896.1">
    <property type="nucleotide sequence ID" value="NZ_CP009935.1"/>
</dbReference>
<dbReference type="SMR" id="A9R2K3"/>
<dbReference type="GeneID" id="96665168"/>
<dbReference type="KEGG" id="ypg:YpAngola_A3169"/>
<dbReference type="PATRIC" id="fig|349746.12.peg.4228"/>
<dbReference type="UniPathway" id="UPA00031">
    <property type="reaction ID" value="UER00006"/>
</dbReference>
<dbReference type="GO" id="GO:0005737">
    <property type="term" value="C:cytoplasm"/>
    <property type="evidence" value="ECO:0007669"/>
    <property type="project" value="UniProtKB-SubCell"/>
</dbReference>
<dbReference type="GO" id="GO:0005524">
    <property type="term" value="F:ATP binding"/>
    <property type="evidence" value="ECO:0007669"/>
    <property type="project" value="UniProtKB-KW"/>
</dbReference>
<dbReference type="GO" id="GO:0003879">
    <property type="term" value="F:ATP phosphoribosyltransferase activity"/>
    <property type="evidence" value="ECO:0007669"/>
    <property type="project" value="UniProtKB-UniRule"/>
</dbReference>
<dbReference type="GO" id="GO:0000287">
    <property type="term" value="F:magnesium ion binding"/>
    <property type="evidence" value="ECO:0007669"/>
    <property type="project" value="UniProtKB-UniRule"/>
</dbReference>
<dbReference type="GO" id="GO:0000105">
    <property type="term" value="P:L-histidine biosynthetic process"/>
    <property type="evidence" value="ECO:0007669"/>
    <property type="project" value="UniProtKB-UniRule"/>
</dbReference>
<dbReference type="CDD" id="cd13592">
    <property type="entry name" value="PBP2_HisGL2"/>
    <property type="match status" value="1"/>
</dbReference>
<dbReference type="FunFam" id="3.30.70.120:FF:000002">
    <property type="entry name" value="ATP phosphoribosyltransferase"/>
    <property type="match status" value="1"/>
</dbReference>
<dbReference type="FunFam" id="3.40.190.10:FF:000008">
    <property type="entry name" value="ATP phosphoribosyltransferase"/>
    <property type="match status" value="1"/>
</dbReference>
<dbReference type="Gene3D" id="3.30.70.120">
    <property type="match status" value="1"/>
</dbReference>
<dbReference type="Gene3D" id="3.40.190.10">
    <property type="entry name" value="Periplasmic binding protein-like II"/>
    <property type="match status" value="2"/>
</dbReference>
<dbReference type="HAMAP" id="MF_00079">
    <property type="entry name" value="HisG_Long"/>
    <property type="match status" value="1"/>
</dbReference>
<dbReference type="InterPro" id="IPR020621">
    <property type="entry name" value="ATP-PRT_HisG_long"/>
</dbReference>
<dbReference type="InterPro" id="IPR013820">
    <property type="entry name" value="ATP_PRibTrfase_cat"/>
</dbReference>
<dbReference type="InterPro" id="IPR018198">
    <property type="entry name" value="ATP_PRibTrfase_CS"/>
</dbReference>
<dbReference type="InterPro" id="IPR001348">
    <property type="entry name" value="ATP_PRibTrfase_HisG"/>
</dbReference>
<dbReference type="InterPro" id="IPR013115">
    <property type="entry name" value="HisG_C"/>
</dbReference>
<dbReference type="InterPro" id="IPR011322">
    <property type="entry name" value="N-reg_PII-like_a/b"/>
</dbReference>
<dbReference type="InterPro" id="IPR015867">
    <property type="entry name" value="N-reg_PII/ATP_PRibTrfase_C"/>
</dbReference>
<dbReference type="NCBIfam" id="TIGR00070">
    <property type="entry name" value="hisG"/>
    <property type="match status" value="1"/>
</dbReference>
<dbReference type="NCBIfam" id="TIGR03455">
    <property type="entry name" value="HisG_C-term"/>
    <property type="match status" value="1"/>
</dbReference>
<dbReference type="PANTHER" id="PTHR21403:SF8">
    <property type="entry name" value="ATP PHOSPHORIBOSYLTRANSFERASE"/>
    <property type="match status" value="1"/>
</dbReference>
<dbReference type="PANTHER" id="PTHR21403">
    <property type="entry name" value="ATP PHOSPHORIBOSYLTRANSFERASE ATP-PRTASE"/>
    <property type="match status" value="1"/>
</dbReference>
<dbReference type="Pfam" id="PF01634">
    <property type="entry name" value="HisG"/>
    <property type="match status" value="1"/>
</dbReference>
<dbReference type="Pfam" id="PF08029">
    <property type="entry name" value="HisG_C"/>
    <property type="match status" value="1"/>
</dbReference>
<dbReference type="SUPFAM" id="SSF54913">
    <property type="entry name" value="GlnB-like"/>
    <property type="match status" value="1"/>
</dbReference>
<dbReference type="SUPFAM" id="SSF53850">
    <property type="entry name" value="Periplasmic binding protein-like II"/>
    <property type="match status" value="1"/>
</dbReference>
<dbReference type="PROSITE" id="PS01316">
    <property type="entry name" value="ATP_P_PHORIBOSYLTR"/>
    <property type="match status" value="1"/>
</dbReference>
<name>HIS1_YERPG</name>
<evidence type="ECO:0000255" key="1">
    <source>
        <dbReference type="HAMAP-Rule" id="MF_00079"/>
    </source>
</evidence>
<feature type="chain" id="PRO_1000092764" description="ATP phosphoribosyltransferase">
    <location>
        <begin position="1"/>
        <end position="299"/>
    </location>
</feature>
<protein>
    <recommendedName>
        <fullName evidence="1">ATP phosphoribosyltransferase</fullName>
        <shortName evidence="1">ATP-PRT</shortName>
        <shortName evidence="1">ATP-PRTase</shortName>
        <ecNumber evidence="1">2.4.2.17</ecNumber>
    </recommendedName>
</protein>
<reference key="1">
    <citation type="journal article" date="2010" name="J. Bacteriol.">
        <title>Genome sequence of the deep-rooted Yersinia pestis strain Angola reveals new insights into the evolution and pangenome of the plague bacterium.</title>
        <authorList>
            <person name="Eppinger M."/>
            <person name="Worsham P.L."/>
            <person name="Nikolich M.P."/>
            <person name="Riley D.R."/>
            <person name="Sebastian Y."/>
            <person name="Mou S."/>
            <person name="Achtman M."/>
            <person name="Lindler L.E."/>
            <person name="Ravel J."/>
        </authorList>
    </citation>
    <scope>NUCLEOTIDE SEQUENCE [LARGE SCALE GENOMIC DNA]</scope>
    <source>
        <strain>Angola</strain>
    </source>
</reference>
<proteinExistence type="inferred from homology"/>
<sequence>MLDKTRLRIAMQKSGRLSDESQELLSRCGIKINLQQQRLIAFAENMPIDILRVRDDDIPGLVMDGVVDLGIIGENVLEEELLNRRAQGDDPRYFTLRRLDFGGCRLSLAAPLDAEYTGPQCLQDTRIATSYPHILKQYLDKQGVRFKSCLLNGSVEVAPRAGLADAICDLVSTGATLEANGLREVEVIYRSKACLIQRDGEMSVDKQQLIDRLMTRIQGVIQARESKYIMMHAPSERLDEIITLLPGAERPTILPLAGDKSRVAMHMVSSETLFWETMEKLKALGASSILVLPIEKMME</sequence>
<comment type="function">
    <text evidence="1">Catalyzes the condensation of ATP and 5-phosphoribose 1-diphosphate to form N'-(5'-phosphoribosyl)-ATP (PR-ATP). Has a crucial role in the pathway because the rate of histidine biosynthesis seems to be controlled primarily by regulation of HisG enzymatic activity.</text>
</comment>
<comment type="catalytic activity">
    <reaction evidence="1">
        <text>1-(5-phospho-beta-D-ribosyl)-ATP + diphosphate = 5-phospho-alpha-D-ribose 1-diphosphate + ATP</text>
        <dbReference type="Rhea" id="RHEA:18473"/>
        <dbReference type="ChEBI" id="CHEBI:30616"/>
        <dbReference type="ChEBI" id="CHEBI:33019"/>
        <dbReference type="ChEBI" id="CHEBI:58017"/>
        <dbReference type="ChEBI" id="CHEBI:73183"/>
        <dbReference type="EC" id="2.4.2.17"/>
    </reaction>
</comment>
<comment type="cofactor">
    <cofactor evidence="1">
        <name>Mg(2+)</name>
        <dbReference type="ChEBI" id="CHEBI:18420"/>
    </cofactor>
</comment>
<comment type="activity regulation">
    <text evidence="1">Feedback inhibited by histidine.</text>
</comment>
<comment type="pathway">
    <text evidence="1">Amino-acid biosynthesis; L-histidine biosynthesis; L-histidine from 5-phospho-alpha-D-ribose 1-diphosphate: step 1/9.</text>
</comment>
<comment type="subunit">
    <text evidence="1">Equilibrium between an active dimeric form, an inactive hexameric form and higher aggregates. Interconversion between the various forms is largely reversible and is influenced by the natural substrates and inhibitors of the enzyme.</text>
</comment>
<comment type="subcellular location">
    <subcellularLocation>
        <location evidence="1">Cytoplasm</location>
    </subcellularLocation>
</comment>
<comment type="similarity">
    <text evidence="1">Belongs to the ATP phosphoribosyltransferase family. Long subfamily.</text>
</comment>